<keyword id="KW-0002">3D-structure</keyword>
<keyword id="KW-0007">Acetylation</keyword>
<keyword id="KW-0106">Calcium</keyword>
<keyword id="KW-0148">Chlorophyll</keyword>
<keyword id="KW-0150">Chloroplast</keyword>
<keyword id="KW-0157">Chromophore</keyword>
<keyword id="KW-0903">Direct protein sequencing</keyword>
<keyword id="KW-0249">Electron transport</keyword>
<keyword id="KW-0359">Herbicide resistance</keyword>
<keyword id="KW-0408">Iron</keyword>
<keyword id="KW-0460">Magnesium</keyword>
<keyword id="KW-0464">Manganese</keyword>
<keyword id="KW-0472">Membrane</keyword>
<keyword id="KW-0479">Metal-binding</keyword>
<keyword id="KW-0560">Oxidoreductase</keyword>
<keyword id="KW-0597">Phosphoprotein</keyword>
<keyword id="KW-0602">Photosynthesis</keyword>
<keyword id="KW-0604">Photosystem II</keyword>
<keyword id="KW-0934">Plastid</keyword>
<keyword id="KW-1185">Reference proteome</keyword>
<keyword id="KW-0793">Thylakoid</keyword>
<keyword id="KW-0812">Transmembrane</keyword>
<keyword id="KW-1133">Transmembrane helix</keyword>
<keyword id="KW-0813">Transport</keyword>
<organism>
    <name type="scientific">Arabidopsis thaliana</name>
    <name type="common">Mouse-ear cress</name>
    <dbReference type="NCBI Taxonomy" id="3702"/>
    <lineage>
        <taxon>Eukaryota</taxon>
        <taxon>Viridiplantae</taxon>
        <taxon>Streptophyta</taxon>
        <taxon>Embryophyta</taxon>
        <taxon>Tracheophyta</taxon>
        <taxon>Spermatophyta</taxon>
        <taxon>Magnoliopsida</taxon>
        <taxon>eudicotyledons</taxon>
        <taxon>Gunneridae</taxon>
        <taxon>Pentapetalae</taxon>
        <taxon>rosids</taxon>
        <taxon>malvids</taxon>
        <taxon>Brassicales</taxon>
        <taxon>Brassicaceae</taxon>
        <taxon>Camelineae</taxon>
        <taxon>Arabidopsis</taxon>
    </lineage>
</organism>
<gene>
    <name evidence="1" type="primary">psbA</name>
    <name type="ordered locus">AtCg00020</name>
</gene>
<name>PSBA_ARATH</name>
<evidence type="ECO:0000255" key="1">
    <source>
        <dbReference type="HAMAP-Rule" id="MF_01379"/>
    </source>
</evidence>
<evidence type="ECO:0000269" key="2">
    <source>
    </source>
</evidence>
<evidence type="ECO:0000269" key="3">
    <source>
    </source>
</evidence>
<evidence type="ECO:0000269" key="4">
    <source>
    </source>
</evidence>
<evidence type="ECO:0007829" key="5">
    <source>
        <dbReference type="PDB" id="7OUI"/>
    </source>
</evidence>
<proteinExistence type="evidence at protein level"/>
<dbReference type="EC" id="1.10.3.9" evidence="1"/>
<dbReference type="EMBL" id="X79898">
    <property type="protein sequence ID" value="CAA56270.1"/>
    <property type="molecule type" value="Genomic_DNA"/>
</dbReference>
<dbReference type="EMBL" id="AP000423">
    <property type="protein sequence ID" value="BAA84365.1"/>
    <property type="molecule type" value="Genomic_DNA"/>
</dbReference>
<dbReference type="PIR" id="S57265">
    <property type="entry name" value="S57265"/>
</dbReference>
<dbReference type="RefSeq" id="NP_051039.1">
    <property type="nucleotide sequence ID" value="NC_000932.1"/>
</dbReference>
<dbReference type="PDB" id="5MDX">
    <property type="method" value="EM"/>
    <property type="resolution" value="5.30 A"/>
    <property type="chains" value="A/a=2-344"/>
</dbReference>
<dbReference type="PDB" id="7OUI">
    <property type="method" value="EM"/>
    <property type="resolution" value="2.79 A"/>
    <property type="chains" value="A/a=2-353"/>
</dbReference>
<dbReference type="PDBsum" id="5MDX"/>
<dbReference type="PDBsum" id="7OUI"/>
<dbReference type="EMDB" id="EMD-13078"/>
<dbReference type="EMDB" id="EMD-3491"/>
<dbReference type="SMR" id="P83755"/>
<dbReference type="BioGRID" id="29991">
    <property type="interactions" value="25"/>
</dbReference>
<dbReference type="FunCoup" id="P83755">
    <property type="interactions" value="213"/>
</dbReference>
<dbReference type="IntAct" id="P83755">
    <property type="interactions" value="11"/>
</dbReference>
<dbReference type="MINT" id="P83755"/>
<dbReference type="STRING" id="3702.P83755"/>
<dbReference type="TCDB" id="3.E.2.2.3">
    <property type="family name" value="the photosynthetic reaction center (prc) family"/>
</dbReference>
<dbReference type="iPTMnet" id="P83755"/>
<dbReference type="PaxDb" id="3702-ATCG00020.1"/>
<dbReference type="ProteomicsDB" id="226058"/>
<dbReference type="EnsemblPlants" id="ATCG00020.1">
    <property type="protein sequence ID" value="ATCG00020.1"/>
    <property type="gene ID" value="ATCG00020"/>
</dbReference>
<dbReference type="GeneID" id="844802"/>
<dbReference type="Gramene" id="ATCG00020.1">
    <property type="protein sequence ID" value="ATCG00020.1"/>
    <property type="gene ID" value="ATCG00020"/>
</dbReference>
<dbReference type="KEGG" id="ath:ArthCp002"/>
<dbReference type="Araport" id="ATCG00020"/>
<dbReference type="TAIR" id="ATCG00020">
    <property type="gene designation" value="PSBA"/>
</dbReference>
<dbReference type="eggNOG" id="ENOG502QR09">
    <property type="taxonomic scope" value="Eukaryota"/>
</dbReference>
<dbReference type="HOGENOM" id="CLU_054206_1_0_1"/>
<dbReference type="InParanoid" id="P83755"/>
<dbReference type="OMA" id="CQWVTDT"/>
<dbReference type="BioCyc" id="MetaCyc:ATCG00020-MONOMER"/>
<dbReference type="PRO" id="PR:P83755"/>
<dbReference type="Proteomes" id="UP000006548">
    <property type="component" value="Chloroplast Pltd"/>
</dbReference>
<dbReference type="ExpressionAtlas" id="P83755">
    <property type="expression patterns" value="baseline and differential"/>
</dbReference>
<dbReference type="GO" id="GO:0009507">
    <property type="term" value="C:chloroplast"/>
    <property type="evidence" value="ECO:0007005"/>
    <property type="project" value="TAIR"/>
</dbReference>
<dbReference type="GO" id="GO:0009534">
    <property type="term" value="C:chloroplast thylakoid"/>
    <property type="evidence" value="ECO:0007005"/>
    <property type="project" value="TAIR"/>
</dbReference>
<dbReference type="GO" id="GO:0009535">
    <property type="term" value="C:chloroplast thylakoid membrane"/>
    <property type="evidence" value="ECO:0007005"/>
    <property type="project" value="TAIR"/>
</dbReference>
<dbReference type="GO" id="GO:0009523">
    <property type="term" value="C:photosystem II"/>
    <property type="evidence" value="ECO:0007669"/>
    <property type="project" value="UniProtKB-KW"/>
</dbReference>
<dbReference type="GO" id="GO:0009536">
    <property type="term" value="C:plastid"/>
    <property type="evidence" value="ECO:0007005"/>
    <property type="project" value="TAIR"/>
</dbReference>
<dbReference type="GO" id="GO:0009579">
    <property type="term" value="C:thylakoid"/>
    <property type="evidence" value="ECO:0007005"/>
    <property type="project" value="TAIR"/>
</dbReference>
<dbReference type="GO" id="GO:0016168">
    <property type="term" value="F:chlorophyll binding"/>
    <property type="evidence" value="ECO:0000304"/>
    <property type="project" value="TAIR"/>
</dbReference>
<dbReference type="GO" id="GO:0045156">
    <property type="term" value="F:electron transporter, transferring electrons within the cyclic electron transport pathway of photosynthesis activity"/>
    <property type="evidence" value="ECO:0007669"/>
    <property type="project" value="InterPro"/>
</dbReference>
<dbReference type="GO" id="GO:0005506">
    <property type="term" value="F:iron ion binding"/>
    <property type="evidence" value="ECO:0007669"/>
    <property type="project" value="UniProtKB-UniRule"/>
</dbReference>
<dbReference type="GO" id="GO:0046872">
    <property type="term" value="F:metal ion binding"/>
    <property type="evidence" value="ECO:0000314"/>
    <property type="project" value="DisProt"/>
</dbReference>
<dbReference type="GO" id="GO:0003729">
    <property type="term" value="F:mRNA binding"/>
    <property type="evidence" value="ECO:0000314"/>
    <property type="project" value="TAIR"/>
</dbReference>
<dbReference type="GO" id="GO:0016682">
    <property type="term" value="F:oxidoreductase activity, acting on diphenols and related substances as donors, oxygen as acceptor"/>
    <property type="evidence" value="ECO:0007669"/>
    <property type="project" value="UniProtKB-UniRule"/>
</dbReference>
<dbReference type="GO" id="GO:0010242">
    <property type="term" value="F:oxygen evolving activity"/>
    <property type="evidence" value="ECO:0007669"/>
    <property type="project" value="UniProtKB-EC"/>
</dbReference>
<dbReference type="GO" id="GO:0009772">
    <property type="term" value="P:photosynthetic electron transport in photosystem II"/>
    <property type="evidence" value="ECO:0007669"/>
    <property type="project" value="InterPro"/>
</dbReference>
<dbReference type="GO" id="GO:0009635">
    <property type="term" value="P:response to herbicide"/>
    <property type="evidence" value="ECO:0007669"/>
    <property type="project" value="UniProtKB-KW"/>
</dbReference>
<dbReference type="CDD" id="cd09289">
    <property type="entry name" value="Photosystem-II_D1"/>
    <property type="match status" value="1"/>
</dbReference>
<dbReference type="DisProt" id="DP02575"/>
<dbReference type="FunFam" id="1.20.85.10:FF:000002">
    <property type="entry name" value="Photosystem II protein D1"/>
    <property type="match status" value="1"/>
</dbReference>
<dbReference type="Gene3D" id="1.20.85.10">
    <property type="entry name" value="Photosystem II protein D1-like"/>
    <property type="match status" value="1"/>
</dbReference>
<dbReference type="HAMAP" id="MF_01379">
    <property type="entry name" value="PSII_PsbA_D1"/>
    <property type="match status" value="1"/>
</dbReference>
<dbReference type="InterPro" id="IPR055266">
    <property type="entry name" value="D1/D2"/>
</dbReference>
<dbReference type="InterPro" id="IPR036854">
    <property type="entry name" value="Photo_II_D1/D2_sf"/>
</dbReference>
<dbReference type="InterPro" id="IPR000484">
    <property type="entry name" value="Photo_RC_L/M"/>
</dbReference>
<dbReference type="InterPro" id="IPR055265">
    <property type="entry name" value="Photo_RC_L/M_CS"/>
</dbReference>
<dbReference type="InterPro" id="IPR005867">
    <property type="entry name" value="PSII_D1"/>
</dbReference>
<dbReference type="NCBIfam" id="TIGR01151">
    <property type="entry name" value="psbA"/>
    <property type="match status" value="1"/>
</dbReference>
<dbReference type="PANTHER" id="PTHR33149:SF12">
    <property type="entry name" value="PHOTOSYSTEM II D2 PROTEIN"/>
    <property type="match status" value="1"/>
</dbReference>
<dbReference type="PANTHER" id="PTHR33149">
    <property type="entry name" value="PHOTOSYSTEM II PROTEIN D1"/>
    <property type="match status" value="1"/>
</dbReference>
<dbReference type="Pfam" id="PF00124">
    <property type="entry name" value="Photo_RC"/>
    <property type="match status" value="1"/>
</dbReference>
<dbReference type="PRINTS" id="PR00256">
    <property type="entry name" value="REACTNCENTRE"/>
</dbReference>
<dbReference type="SUPFAM" id="SSF81483">
    <property type="entry name" value="Bacterial photosystem II reaction centre, L and M subunits"/>
    <property type="match status" value="1"/>
</dbReference>
<dbReference type="PROSITE" id="PS00244">
    <property type="entry name" value="REACTION_CENTER"/>
    <property type="match status" value="1"/>
</dbReference>
<reference key="1">
    <citation type="journal article" date="1995" name="Curr. Genet.">
        <title>Identification and characterization of the Arabidopsis thaliana chloroplast DNA region containing the genes psbA, trnH and rps19'.</title>
        <authorList>
            <person name="Liere K."/>
            <person name="Kestermann M."/>
            <person name="Mueller U."/>
            <person name="Link G."/>
        </authorList>
    </citation>
    <scope>NUCLEOTIDE SEQUENCE [GENOMIC DNA]</scope>
    <source>
        <strain>cv. Landsberg erecta</strain>
    </source>
</reference>
<reference key="2">
    <citation type="journal article" date="1999" name="DNA Res.">
        <title>Complete structure of the chloroplast genome of Arabidopsis thaliana.</title>
        <authorList>
            <person name="Sato S."/>
            <person name="Nakamura Y."/>
            <person name="Kaneko T."/>
            <person name="Asamizu E."/>
            <person name="Tabata S."/>
        </authorList>
    </citation>
    <scope>NUCLEOTIDE SEQUENCE [LARGE SCALE GENOMIC DNA]</scope>
    <source>
        <strain>cv. Columbia</strain>
    </source>
</reference>
<reference key="3">
    <citation type="journal article" date="2001" name="J. Biol. Chem.">
        <title>Mass spectrometric resolution of reversible protein phosphorylation in photosynthetic membranes of Arabidopsis thaliana.</title>
        <authorList>
            <person name="Vener A.V."/>
            <person name="Harms A."/>
            <person name="Sussman M.R."/>
            <person name="Vierstra R.D."/>
        </authorList>
    </citation>
    <scope>PROTEIN SEQUENCE OF 2-7</scope>
    <scope>PHOSPHORYLATION AT THR-2</scope>
    <scope>ACETYLATION AT THR-2</scope>
    <source>
        <strain>cv. Columbia</strain>
    </source>
</reference>
<reference key="4">
    <citation type="journal article" date="1999" name="EMBO J.">
        <title>Interactions of ribosome nascent chain complexes of the chloroplast-encoded D1 thylakoid membrane protein with cpSRP54.</title>
        <authorList>
            <person name="Nilsson R."/>
            <person name="Brunner J."/>
            <person name="Hoffman N.E."/>
            <person name="van Wijk K.J."/>
        </authorList>
    </citation>
    <scope>INTERACTION WITH FFC/CPSRP54</scope>
</reference>
<reference key="5">
    <citation type="journal article" date="2010" name="Plant Cell">
        <title>The Arabidopsis thylakoid protein PAM68 is required for efficient D1 biogenesis and photosystem II assembly.</title>
        <authorList>
            <person name="Armbruster U."/>
            <person name="Zuhlke J."/>
            <person name="Rengstl B."/>
            <person name="Kreller R."/>
            <person name="Makarenko E."/>
            <person name="Ruhle T."/>
            <person name="Schunemann D."/>
            <person name="Jahns P."/>
            <person name="Weisshaar B."/>
            <person name="Nickelsen J."/>
            <person name="Leister D."/>
        </authorList>
    </citation>
    <scope>INTERACTION WITH PAM68</scope>
</reference>
<sequence length="353" mass="38937">MTAILERRESESLWGRFCNWITSTENRLYIGWFGVLMIPTLLTATSVFIIAFIAAPPVDIDGIREPVSGSLLYGNNIISGAIIPTSAAIGLHFYPIWEAASVDEWLYNGGPYELIVLHFLLGVACYMGREWELSFRLGMRPWIAVAYSAPVAAATAVFLIYPIGQGSFSDGMPLGISGTFNFMIVFQAEHNILMHPFHMLGVAGVFGGSLFSAMHGSLVTSSLIRETTENESANEGYRFGQEEETYNIVAAHGYFGRLIFQYASFNNSRSLHFFLAAWPVVGIWFTALGISTMAFNLNGFNFNQSVVDSQGRVINTWADIINRANLGMEVMHERNAHNFPLDLAAVEAPSTNG</sequence>
<accession>P83755</accession>
<accession>Q33592</accession>
<comment type="function">
    <text evidence="1">Photosystem II (PSII) is a light-driven water:plastoquinone oxidoreductase that uses light energy to abstract electrons from H(2)O, generating O(2) and a proton gradient subsequently used for ATP formation. It consists of a core antenna complex that captures photons, and an electron transfer chain that converts photonic excitation into a charge separation. The D1/D2 (PsbA/PsbD) reaction center heterodimer binds P680, the primary electron donor of PSII as well as several subsequent electron acceptors.</text>
</comment>
<comment type="catalytic activity">
    <reaction evidence="1">
        <text>2 a plastoquinone + 4 hnu + 2 H2O = 2 a plastoquinol + O2</text>
        <dbReference type="Rhea" id="RHEA:36359"/>
        <dbReference type="Rhea" id="RHEA-COMP:9561"/>
        <dbReference type="Rhea" id="RHEA-COMP:9562"/>
        <dbReference type="ChEBI" id="CHEBI:15377"/>
        <dbReference type="ChEBI" id="CHEBI:15379"/>
        <dbReference type="ChEBI" id="CHEBI:17757"/>
        <dbReference type="ChEBI" id="CHEBI:30212"/>
        <dbReference type="ChEBI" id="CHEBI:62192"/>
        <dbReference type="EC" id="1.10.3.9"/>
    </reaction>
</comment>
<comment type="cofactor">
    <text evidence="1">The D1/D2 heterodimer binds P680, chlorophylls that are the primary electron donor of PSII, and subsequent electron acceptors. It shares a non-heme iron and each subunit binds pheophytin, quinone, additional chlorophylls, carotenoids and lipids. D1 provides most of the ligands for the Mn4-Ca-O5 cluster of the oxygen-evolving complex (OEC). There is also a Cl(-1) ion associated with D1 and D2, which is required for oxygen evolution. The PSII complex binds additional chlorophylls, carotenoids and specific lipids.</text>
</comment>
<comment type="subunit">
    <text evidence="1 3 4">PSII is composed of 1 copy each of membrane proteins PsbA, PsbB, PsbC, PsbD, PsbE, PsbF, PsbH, PsbI, PsbJ, PsbK, PsbL, PsbM, PsbT, PsbX, PsbY, PsbZ, Psb30/Ycf12, at least 3 peripheral proteins of the oxygen-evolving complex and a large number of cofactors. It forms dimeric complexes (By similarity). Interacts with PAM68 (PubMed:20923938). The nascent chain still attached to the ribosome interacts with FFC/ cpSRP54, but not with CAO/cpSRP43 or SecA (PubMed:9927433).</text>
</comment>
<comment type="interaction">
    <interactant intactId="EBI-1236013">
        <id>P83755</id>
    </interactant>
    <interactant intactId="EBI-1235664">
        <id>P25854</id>
        <label>CAM4</label>
    </interactant>
    <organismsDiffer>false</organismsDiffer>
    <experiments>2</experiments>
</comment>
<comment type="interaction">
    <interactant intactId="EBI-1236013">
        <id>P83755</id>
    </interactant>
    <interactant intactId="EBI-1236031">
        <id>P59220</id>
        <label>CAM7</label>
    </interactant>
    <organismsDiffer>false</organismsDiffer>
    <experiments>2</experiments>
</comment>
<comment type="interaction">
    <interactant intactId="EBI-1236013">
        <id>P83755</id>
    </interactant>
    <interactant intactId="EBI-1236048">
        <id>Q9S744</id>
        <label>CML9</label>
    </interactant>
    <organismsDiffer>false</organismsDiffer>
    <experiments>2</experiments>
</comment>
<comment type="subcellular location">
    <subcellularLocation>
        <location evidence="1">Plastid</location>
        <location evidence="1">Chloroplast thylakoid membrane</location>
        <topology evidence="1">Multi-pass membrane protein</topology>
    </subcellularLocation>
</comment>
<comment type="PTM">
    <text evidence="2">Phosphorylation occurs in normal plant growth light conditions. Rapid dephosphorylation occurs during heat shock.</text>
</comment>
<comment type="PTM">
    <text evidence="1">Tyr-161 forms a radical intermediate that is referred to as redox-active TyrZ, YZ or Y-Z.</text>
</comment>
<comment type="PTM">
    <text evidence="1">C-terminally processed by CTPA; processing is essential to allow assembly of the oxygen-evolving complex and thus photosynthetic growth.</text>
</comment>
<comment type="miscellaneous">
    <text evidence="1">2 of the reaction center chlorophylls (ChlD1 and ChlD2) are entirely coordinated by water.</text>
</comment>
<comment type="miscellaneous">
    <text evidence="1">Herbicides such as atrazine, BNT, diuron or ioxynil bind in the Q(B) binding site and block subsequent electron transfer.</text>
</comment>
<comment type="similarity">
    <text evidence="1">Belongs to the reaction center PufL/M/PsbA/D family.</text>
</comment>
<geneLocation type="chloroplast"/>
<feature type="initiator methionine" description="Removed" evidence="2">
    <location>
        <position position="1"/>
    </location>
</feature>
<feature type="chain" id="PRO_0000090425" description="Photosystem II protein D1" evidence="1">
    <location>
        <begin position="2"/>
        <end position="344"/>
    </location>
</feature>
<feature type="propeptide" id="PRO_0000316439" evidence="1">
    <location>
        <begin position="345"/>
        <end position="353"/>
    </location>
</feature>
<feature type="transmembrane region" description="Helical" evidence="1">
    <location>
        <begin position="29"/>
        <end position="46"/>
    </location>
</feature>
<feature type="transmembrane region" description="Helical" evidence="1">
    <location>
        <begin position="118"/>
        <end position="133"/>
    </location>
</feature>
<feature type="transmembrane region" description="Helical" evidence="1">
    <location>
        <begin position="142"/>
        <end position="156"/>
    </location>
</feature>
<feature type="transmembrane region" description="Helical" evidence="1">
    <location>
        <begin position="197"/>
        <end position="218"/>
    </location>
</feature>
<feature type="transmembrane region" description="Helical" evidence="1">
    <location>
        <begin position="274"/>
        <end position="288"/>
    </location>
</feature>
<feature type="binding site" description="axial binding residue" evidence="1">
    <location>
        <position position="118"/>
    </location>
    <ligand>
        <name>chlorophyll a</name>
        <dbReference type="ChEBI" id="CHEBI:58416"/>
        <label>ChlzD1</label>
    </ligand>
    <ligandPart>
        <name>Mg</name>
        <dbReference type="ChEBI" id="CHEBI:25107"/>
    </ligandPart>
</feature>
<feature type="binding site" evidence="1">
    <location>
        <position position="126"/>
    </location>
    <ligand>
        <name>pheophytin a</name>
        <dbReference type="ChEBI" id="CHEBI:136840"/>
        <label>D1</label>
    </ligand>
</feature>
<feature type="binding site" evidence="1">
    <location>
        <position position="170"/>
    </location>
    <ligand>
        <name>[CaMn4O5] cluster</name>
        <dbReference type="ChEBI" id="CHEBI:189552"/>
    </ligand>
</feature>
<feature type="binding site" evidence="1">
    <location>
        <position position="189"/>
    </location>
    <ligand>
        <name>[CaMn4O5] cluster</name>
        <dbReference type="ChEBI" id="CHEBI:189552"/>
    </ligand>
</feature>
<feature type="binding site" description="axial binding residue" evidence="1">
    <location>
        <position position="198"/>
    </location>
    <ligand>
        <name>chlorophyll a</name>
        <dbReference type="ChEBI" id="CHEBI:58416"/>
        <label>PD1</label>
    </ligand>
    <ligandPart>
        <name>Mg</name>
        <dbReference type="ChEBI" id="CHEBI:25107"/>
    </ligandPart>
</feature>
<feature type="binding site" evidence="1">
    <location>
        <position position="215"/>
    </location>
    <ligand>
        <name>a quinone</name>
        <dbReference type="ChEBI" id="CHEBI:132124"/>
        <label>B</label>
    </ligand>
</feature>
<feature type="binding site" evidence="1">
    <location>
        <position position="215"/>
    </location>
    <ligand>
        <name>Fe cation</name>
        <dbReference type="ChEBI" id="CHEBI:24875"/>
        <note>ligand shared with heterodimeric partner</note>
    </ligand>
</feature>
<feature type="binding site" evidence="1">
    <location>
        <begin position="264"/>
        <end position="265"/>
    </location>
    <ligand>
        <name>a quinone</name>
        <dbReference type="ChEBI" id="CHEBI:132124"/>
        <label>B</label>
    </ligand>
</feature>
<feature type="binding site" evidence="1">
    <location>
        <position position="272"/>
    </location>
    <ligand>
        <name>Fe cation</name>
        <dbReference type="ChEBI" id="CHEBI:24875"/>
        <note>ligand shared with heterodimeric partner</note>
    </ligand>
</feature>
<feature type="binding site" evidence="1">
    <location>
        <position position="332"/>
    </location>
    <ligand>
        <name>[CaMn4O5] cluster</name>
        <dbReference type="ChEBI" id="CHEBI:189552"/>
    </ligand>
</feature>
<feature type="binding site" evidence="1">
    <location>
        <position position="333"/>
    </location>
    <ligand>
        <name>[CaMn4O5] cluster</name>
        <dbReference type="ChEBI" id="CHEBI:189552"/>
    </ligand>
</feature>
<feature type="binding site" evidence="1">
    <location>
        <position position="342"/>
    </location>
    <ligand>
        <name>[CaMn4O5] cluster</name>
        <dbReference type="ChEBI" id="CHEBI:189552"/>
    </ligand>
</feature>
<feature type="binding site" evidence="1">
    <location>
        <position position="344"/>
    </location>
    <ligand>
        <name>[CaMn4O5] cluster</name>
        <dbReference type="ChEBI" id="CHEBI:189552"/>
    </ligand>
</feature>
<feature type="site" description="Tyrosine radical intermediate" evidence="1">
    <location>
        <position position="161"/>
    </location>
</feature>
<feature type="site" description="Stabilizes free radical intermediate" evidence="1">
    <location>
        <position position="190"/>
    </location>
</feature>
<feature type="site" description="Cleavage; by CTPA" evidence="1">
    <location>
        <begin position="344"/>
        <end position="345"/>
    </location>
</feature>
<feature type="modified residue" description="N-acetylthreonine" evidence="1 2">
    <location>
        <position position="2"/>
    </location>
</feature>
<feature type="modified residue" description="Phosphothreonine" evidence="1 2">
    <location>
        <position position="2"/>
    </location>
</feature>
<feature type="helix" evidence="5">
    <location>
        <begin position="13"/>
        <end position="19"/>
    </location>
</feature>
<feature type="strand" evidence="5">
    <location>
        <begin position="26"/>
        <end position="28"/>
    </location>
</feature>
<feature type="helix" evidence="5">
    <location>
        <begin position="32"/>
        <end position="53"/>
    </location>
</feature>
<feature type="strand" evidence="5">
    <location>
        <begin position="62"/>
        <end position="64"/>
    </location>
</feature>
<feature type="turn" evidence="5">
    <location>
        <begin position="71"/>
        <end position="74"/>
    </location>
</feature>
<feature type="turn" evidence="5">
    <location>
        <begin position="77"/>
        <end position="79"/>
    </location>
</feature>
<feature type="turn" evidence="5">
    <location>
        <begin position="87"/>
        <end position="91"/>
    </location>
</feature>
<feature type="helix" evidence="5">
    <location>
        <begin position="96"/>
        <end position="98"/>
    </location>
</feature>
<feature type="strand" evidence="5">
    <location>
        <begin position="99"/>
        <end position="101"/>
    </location>
</feature>
<feature type="helix" evidence="5">
    <location>
        <begin position="102"/>
        <end position="107"/>
    </location>
</feature>
<feature type="helix" evidence="5">
    <location>
        <begin position="110"/>
        <end position="137"/>
    </location>
</feature>
<feature type="helix" evidence="5">
    <location>
        <begin position="143"/>
        <end position="158"/>
    </location>
</feature>
<feature type="helix" evidence="5">
    <location>
        <begin position="160"/>
        <end position="165"/>
    </location>
</feature>
<feature type="helix" evidence="5">
    <location>
        <begin position="168"/>
        <end position="170"/>
    </location>
</feature>
<feature type="helix" evidence="5">
    <location>
        <begin position="176"/>
        <end position="190"/>
    </location>
</feature>
<feature type="helix" evidence="5">
    <location>
        <begin position="192"/>
        <end position="194"/>
    </location>
</feature>
<feature type="helix" evidence="5">
    <location>
        <begin position="196"/>
        <end position="221"/>
    </location>
</feature>
<feature type="turn" evidence="5">
    <location>
        <begin position="229"/>
        <end position="231"/>
    </location>
</feature>
<feature type="helix" evidence="5">
    <location>
        <begin position="248"/>
        <end position="258"/>
    </location>
</feature>
<feature type="helix" evidence="5">
    <location>
        <begin position="268"/>
        <end position="294"/>
    </location>
</feature>
<feature type="helix" evidence="5">
    <location>
        <begin position="317"/>
        <end position="332"/>
    </location>
</feature>
<protein>
    <recommendedName>
        <fullName evidence="1">Photosystem II protein D1</fullName>
        <shortName evidence="1">PSII D1 protein</shortName>
        <ecNumber evidence="1">1.10.3.9</ecNumber>
    </recommendedName>
    <alternativeName>
        <fullName evidence="1">Photosystem II Q(B) protein</fullName>
    </alternativeName>
</protein>